<protein>
    <recommendedName>
        <fullName evidence="1">Urease subunit alpha</fullName>
        <ecNumber evidence="1">3.5.1.5</ecNumber>
    </recommendedName>
    <alternativeName>
        <fullName evidence="1">Urea amidohydrolase subunit alpha</fullName>
    </alternativeName>
</protein>
<organism>
    <name type="scientific">Prochlorococcus marinus (strain MIT 9303)</name>
    <dbReference type="NCBI Taxonomy" id="59922"/>
    <lineage>
        <taxon>Bacteria</taxon>
        <taxon>Bacillati</taxon>
        <taxon>Cyanobacteriota</taxon>
        <taxon>Cyanophyceae</taxon>
        <taxon>Synechococcales</taxon>
        <taxon>Prochlorococcaceae</taxon>
        <taxon>Prochlorococcus</taxon>
    </lineage>
</organism>
<gene>
    <name evidence="1" type="primary">ureC</name>
    <name type="ordered locus">P9303_29811</name>
</gene>
<accession>A2CE01</accession>
<keyword id="KW-0963">Cytoplasm</keyword>
<keyword id="KW-0378">Hydrolase</keyword>
<keyword id="KW-0479">Metal-binding</keyword>
<keyword id="KW-0533">Nickel</keyword>
<name>URE1_PROM3</name>
<sequence length="574" mass="61410">MAYRMDRQAYAETYGPTTGDRMRLADTELILEVERDFTTYGEEVKFGGGKVIRDGMGQSQQSRANGAVDTVITNALILDWWGIVKADIGLRDGRIVAIGKAGNPDITDGIDIVIGPGTEAIAGEGHIVTAGAIDSHIHFICPQQIETALASGVTTMLGGGTGPATGTNATTCTPGSFHISRMLQAAEGLPMNLGFFGKGNASTTEALEEQVLAGACGLKLHEDWGTTPAAIDCCLSVADRFDVQVCIHTDTLNEAGFVEDTIRAIGGRTIHTFHTEGAGGGHAPDIIRICGESNVLPSSTNPTRPYTRNTLEEHLDMLMVCHHLDPAIPEDVAFAESRIRRETIAAEDILHDLGAFSIIASDSQAMGRVGEVITRTFQTAHKMKVQRGPLPEDAANPRGTRNDNNRLKRYIAKVTINPAIAHGIDNHVGSVEVGKLADLVLWKPGFFGVRPELVIKGGSIIWAQMGDANASIPTPGPVHGRPMFAAFGKALAPSCLTFLSQAAIETDLPNKLGLQRACIPVLNTRTIGKAEMHNNNSLPKVEVDPQTYEVFADGELLTCDPAEELPMAQRYLLI</sequence>
<proteinExistence type="inferred from homology"/>
<dbReference type="EC" id="3.5.1.5" evidence="1"/>
<dbReference type="EMBL" id="CP000554">
    <property type="protein sequence ID" value="ABM79711.1"/>
    <property type="molecule type" value="Genomic_DNA"/>
</dbReference>
<dbReference type="RefSeq" id="WP_011827549.1">
    <property type="nucleotide sequence ID" value="NC_008820.1"/>
</dbReference>
<dbReference type="SMR" id="A2CE01"/>
<dbReference type="STRING" id="59922.P9303_29811"/>
<dbReference type="KEGG" id="pmf:P9303_29811"/>
<dbReference type="HOGENOM" id="CLU_000980_0_0_3"/>
<dbReference type="BioCyc" id="PMAR59922:G1G80-2617-MONOMER"/>
<dbReference type="UniPathway" id="UPA00258">
    <property type="reaction ID" value="UER00370"/>
</dbReference>
<dbReference type="Proteomes" id="UP000002274">
    <property type="component" value="Chromosome"/>
</dbReference>
<dbReference type="GO" id="GO:0005737">
    <property type="term" value="C:cytoplasm"/>
    <property type="evidence" value="ECO:0007669"/>
    <property type="project" value="UniProtKB-SubCell"/>
</dbReference>
<dbReference type="GO" id="GO:0016151">
    <property type="term" value="F:nickel cation binding"/>
    <property type="evidence" value="ECO:0007669"/>
    <property type="project" value="UniProtKB-UniRule"/>
</dbReference>
<dbReference type="GO" id="GO:0009039">
    <property type="term" value="F:urease activity"/>
    <property type="evidence" value="ECO:0007669"/>
    <property type="project" value="UniProtKB-UniRule"/>
</dbReference>
<dbReference type="GO" id="GO:0043419">
    <property type="term" value="P:urea catabolic process"/>
    <property type="evidence" value="ECO:0007669"/>
    <property type="project" value="UniProtKB-UniRule"/>
</dbReference>
<dbReference type="CDD" id="cd00375">
    <property type="entry name" value="Urease_alpha"/>
    <property type="match status" value="1"/>
</dbReference>
<dbReference type="Gene3D" id="3.20.20.140">
    <property type="entry name" value="Metal-dependent hydrolases"/>
    <property type="match status" value="1"/>
</dbReference>
<dbReference type="Gene3D" id="2.30.40.10">
    <property type="entry name" value="Urease, subunit C, domain 1"/>
    <property type="match status" value="1"/>
</dbReference>
<dbReference type="HAMAP" id="MF_01953">
    <property type="entry name" value="Urease_alpha"/>
    <property type="match status" value="1"/>
</dbReference>
<dbReference type="InterPro" id="IPR006680">
    <property type="entry name" value="Amidohydro-rel"/>
</dbReference>
<dbReference type="InterPro" id="IPR011059">
    <property type="entry name" value="Metal-dep_hydrolase_composite"/>
</dbReference>
<dbReference type="InterPro" id="IPR032466">
    <property type="entry name" value="Metal_Hydrolase"/>
</dbReference>
<dbReference type="InterPro" id="IPR011612">
    <property type="entry name" value="Urease_alpha_N_dom"/>
</dbReference>
<dbReference type="InterPro" id="IPR050112">
    <property type="entry name" value="Urease_alpha_subunit"/>
</dbReference>
<dbReference type="InterPro" id="IPR017950">
    <property type="entry name" value="Urease_AS"/>
</dbReference>
<dbReference type="InterPro" id="IPR005848">
    <property type="entry name" value="Urease_asu"/>
</dbReference>
<dbReference type="InterPro" id="IPR017951">
    <property type="entry name" value="Urease_asu_c"/>
</dbReference>
<dbReference type="InterPro" id="IPR029754">
    <property type="entry name" value="Urease_Ni-bd"/>
</dbReference>
<dbReference type="NCBIfam" id="NF009685">
    <property type="entry name" value="PRK13206.1"/>
    <property type="match status" value="1"/>
</dbReference>
<dbReference type="NCBIfam" id="NF009686">
    <property type="entry name" value="PRK13207.1"/>
    <property type="match status" value="1"/>
</dbReference>
<dbReference type="NCBIfam" id="TIGR01792">
    <property type="entry name" value="urease_alph"/>
    <property type="match status" value="1"/>
</dbReference>
<dbReference type="PANTHER" id="PTHR43440">
    <property type="entry name" value="UREASE"/>
    <property type="match status" value="1"/>
</dbReference>
<dbReference type="PANTHER" id="PTHR43440:SF1">
    <property type="entry name" value="UREASE"/>
    <property type="match status" value="1"/>
</dbReference>
<dbReference type="Pfam" id="PF01979">
    <property type="entry name" value="Amidohydro_1"/>
    <property type="match status" value="1"/>
</dbReference>
<dbReference type="Pfam" id="PF00449">
    <property type="entry name" value="Urease_alpha"/>
    <property type="match status" value="1"/>
</dbReference>
<dbReference type="PRINTS" id="PR01752">
    <property type="entry name" value="UREASE"/>
</dbReference>
<dbReference type="SUPFAM" id="SSF51338">
    <property type="entry name" value="Composite domain of metallo-dependent hydrolases"/>
    <property type="match status" value="2"/>
</dbReference>
<dbReference type="SUPFAM" id="SSF51556">
    <property type="entry name" value="Metallo-dependent hydrolases"/>
    <property type="match status" value="1"/>
</dbReference>
<dbReference type="PROSITE" id="PS01120">
    <property type="entry name" value="UREASE_1"/>
    <property type="match status" value="1"/>
</dbReference>
<dbReference type="PROSITE" id="PS00145">
    <property type="entry name" value="UREASE_2"/>
    <property type="match status" value="1"/>
</dbReference>
<dbReference type="PROSITE" id="PS51368">
    <property type="entry name" value="UREASE_3"/>
    <property type="match status" value="1"/>
</dbReference>
<feature type="chain" id="PRO_1000070682" description="Urease subunit alpha">
    <location>
        <begin position="1"/>
        <end position="574"/>
    </location>
</feature>
<feature type="domain" description="Urease" evidence="1">
    <location>
        <begin position="131"/>
        <end position="574"/>
    </location>
</feature>
<feature type="active site" description="Proton donor" evidence="1">
    <location>
        <position position="322"/>
    </location>
</feature>
<feature type="binding site" evidence="1">
    <location>
        <position position="136"/>
    </location>
    <ligand>
        <name>Ni(2+)</name>
        <dbReference type="ChEBI" id="CHEBI:49786"/>
        <label>1</label>
    </ligand>
</feature>
<feature type="binding site" evidence="1">
    <location>
        <position position="138"/>
    </location>
    <ligand>
        <name>Ni(2+)</name>
        <dbReference type="ChEBI" id="CHEBI:49786"/>
        <label>1</label>
    </ligand>
</feature>
<feature type="binding site" description="via carbamate group" evidence="1">
    <location>
        <position position="219"/>
    </location>
    <ligand>
        <name>Ni(2+)</name>
        <dbReference type="ChEBI" id="CHEBI:49786"/>
        <label>1</label>
    </ligand>
</feature>
<feature type="binding site" description="via carbamate group" evidence="1">
    <location>
        <position position="219"/>
    </location>
    <ligand>
        <name>Ni(2+)</name>
        <dbReference type="ChEBI" id="CHEBI:49786"/>
        <label>2</label>
    </ligand>
</feature>
<feature type="binding site" evidence="1">
    <location>
        <position position="221"/>
    </location>
    <ligand>
        <name>substrate</name>
    </ligand>
</feature>
<feature type="binding site" evidence="1">
    <location>
        <position position="248"/>
    </location>
    <ligand>
        <name>Ni(2+)</name>
        <dbReference type="ChEBI" id="CHEBI:49786"/>
        <label>2</label>
    </ligand>
</feature>
<feature type="binding site" evidence="1">
    <location>
        <position position="274"/>
    </location>
    <ligand>
        <name>Ni(2+)</name>
        <dbReference type="ChEBI" id="CHEBI:49786"/>
        <label>2</label>
    </ligand>
</feature>
<feature type="binding site" evidence="1">
    <location>
        <position position="362"/>
    </location>
    <ligand>
        <name>Ni(2+)</name>
        <dbReference type="ChEBI" id="CHEBI:49786"/>
        <label>1</label>
    </ligand>
</feature>
<feature type="modified residue" description="N6-carboxylysine" evidence="1">
    <location>
        <position position="219"/>
    </location>
</feature>
<comment type="catalytic activity">
    <reaction evidence="1">
        <text>urea + 2 H2O + H(+) = hydrogencarbonate + 2 NH4(+)</text>
        <dbReference type="Rhea" id="RHEA:20557"/>
        <dbReference type="ChEBI" id="CHEBI:15377"/>
        <dbReference type="ChEBI" id="CHEBI:15378"/>
        <dbReference type="ChEBI" id="CHEBI:16199"/>
        <dbReference type="ChEBI" id="CHEBI:17544"/>
        <dbReference type="ChEBI" id="CHEBI:28938"/>
        <dbReference type="EC" id="3.5.1.5"/>
    </reaction>
</comment>
<comment type="cofactor">
    <cofactor evidence="1">
        <name>Ni cation</name>
        <dbReference type="ChEBI" id="CHEBI:25516"/>
    </cofactor>
    <text evidence="1">Binds 2 nickel ions per subunit.</text>
</comment>
<comment type="pathway">
    <text evidence="1">Nitrogen metabolism; urea degradation; CO(2) and NH(3) from urea (urease route): step 1/1.</text>
</comment>
<comment type="subunit">
    <text evidence="1">Heterotrimer of UreA (gamma), UreB (beta) and UreC (alpha) subunits. Three heterotrimers associate to form the active enzyme.</text>
</comment>
<comment type="subcellular location">
    <subcellularLocation>
        <location evidence="1">Cytoplasm</location>
    </subcellularLocation>
</comment>
<comment type="PTM">
    <text evidence="1">Carboxylation allows a single lysine to coordinate two nickel ions.</text>
</comment>
<comment type="similarity">
    <text evidence="1">Belongs to the metallo-dependent hydrolases superfamily. Urease alpha subunit family.</text>
</comment>
<reference key="1">
    <citation type="journal article" date="2007" name="PLoS Genet.">
        <title>Patterns and implications of gene gain and loss in the evolution of Prochlorococcus.</title>
        <authorList>
            <person name="Kettler G.C."/>
            <person name="Martiny A.C."/>
            <person name="Huang K."/>
            <person name="Zucker J."/>
            <person name="Coleman M.L."/>
            <person name="Rodrigue S."/>
            <person name="Chen F."/>
            <person name="Lapidus A."/>
            <person name="Ferriera S."/>
            <person name="Johnson J."/>
            <person name="Steglich C."/>
            <person name="Church G.M."/>
            <person name="Richardson P."/>
            <person name="Chisholm S.W."/>
        </authorList>
    </citation>
    <scope>NUCLEOTIDE SEQUENCE [LARGE SCALE GENOMIC DNA]</scope>
    <source>
        <strain>MIT 9303</strain>
    </source>
</reference>
<evidence type="ECO:0000255" key="1">
    <source>
        <dbReference type="HAMAP-Rule" id="MF_01953"/>
    </source>
</evidence>